<protein>
    <recommendedName>
        <fullName evidence="1">tRNA N6-adenosine threonylcarbamoyltransferase</fullName>
        <ecNumber evidence="1">2.3.1.234</ecNumber>
    </recommendedName>
    <alternativeName>
        <fullName evidence="1">N6-L-threonylcarbamoyladenine synthase</fullName>
        <shortName evidence="1">t(6)A synthase</shortName>
    </alternativeName>
    <alternativeName>
        <fullName evidence="1">t(6)A37 threonylcarbamoyladenosine biosynthesis protein TsaD</fullName>
    </alternativeName>
    <alternativeName>
        <fullName evidence="1">tRNA threonylcarbamoyladenosine biosynthesis protein TsaD</fullName>
    </alternativeName>
</protein>
<keyword id="KW-0012">Acyltransferase</keyword>
<keyword id="KW-0963">Cytoplasm</keyword>
<keyword id="KW-0408">Iron</keyword>
<keyword id="KW-0479">Metal-binding</keyword>
<keyword id="KW-0808">Transferase</keyword>
<keyword id="KW-0819">tRNA processing</keyword>
<sequence length="341" mass="36518">MRVLGLETSCDETGVALYDSERGLLADALFSQIDLHRVYGGVVPELASRDHVKRMLPLIRQVLDESGCTPADIDAIAYTAGPGLVGALLVGASCAQAMAFAWGVPAVGVHHMEGHLLAPMLEEQPPRFPFVALLVSGGHTQLVRVDGIGRYQLLGESVDDAAGEAFDKTAKLIGLGYPGGPEIARLAELGTPGRFVFPRPMTDRPGLDFSFSGLKTFTLNTWQRCVEAGDDSEQTRCDIALAFQTAVVETLLIKCRRALKQTGLKNLVIAGGVSANQALRSGLEKMLGEMKGQVFYARPRFCTDNGAMIAYAGCQRLLAGQHDGPAISVQPRWPMESLPAV</sequence>
<dbReference type="EC" id="2.3.1.234" evidence="1"/>
<dbReference type="EMBL" id="FM209186">
    <property type="protein sequence ID" value="CAW25304.1"/>
    <property type="molecule type" value="Genomic_DNA"/>
</dbReference>
<dbReference type="RefSeq" id="WP_003129196.1">
    <property type="nucleotide sequence ID" value="NC_011770.1"/>
</dbReference>
<dbReference type="SMR" id="B7V4G6"/>
<dbReference type="KEGG" id="pag:PLES_05771"/>
<dbReference type="HOGENOM" id="CLU_023208_0_0_6"/>
<dbReference type="GO" id="GO:0005737">
    <property type="term" value="C:cytoplasm"/>
    <property type="evidence" value="ECO:0007669"/>
    <property type="project" value="UniProtKB-SubCell"/>
</dbReference>
<dbReference type="GO" id="GO:0005506">
    <property type="term" value="F:iron ion binding"/>
    <property type="evidence" value="ECO:0007669"/>
    <property type="project" value="UniProtKB-UniRule"/>
</dbReference>
<dbReference type="GO" id="GO:0061711">
    <property type="term" value="F:N(6)-L-threonylcarbamoyladenine synthase activity"/>
    <property type="evidence" value="ECO:0007669"/>
    <property type="project" value="UniProtKB-EC"/>
</dbReference>
<dbReference type="GO" id="GO:0002949">
    <property type="term" value="P:tRNA threonylcarbamoyladenosine modification"/>
    <property type="evidence" value="ECO:0007669"/>
    <property type="project" value="UniProtKB-UniRule"/>
</dbReference>
<dbReference type="CDD" id="cd24133">
    <property type="entry name" value="ASKHA_NBD_TsaD_bac"/>
    <property type="match status" value="1"/>
</dbReference>
<dbReference type="FunFam" id="3.30.420.40:FF:000012">
    <property type="entry name" value="tRNA N6-adenosine threonylcarbamoyltransferase"/>
    <property type="match status" value="1"/>
</dbReference>
<dbReference type="FunFam" id="3.30.420.40:FF:000031">
    <property type="entry name" value="tRNA N6-adenosine threonylcarbamoyltransferase"/>
    <property type="match status" value="1"/>
</dbReference>
<dbReference type="Gene3D" id="3.30.420.40">
    <property type="match status" value="2"/>
</dbReference>
<dbReference type="HAMAP" id="MF_01445">
    <property type="entry name" value="TsaD"/>
    <property type="match status" value="1"/>
</dbReference>
<dbReference type="InterPro" id="IPR043129">
    <property type="entry name" value="ATPase_NBD"/>
</dbReference>
<dbReference type="InterPro" id="IPR000905">
    <property type="entry name" value="Gcp-like_dom"/>
</dbReference>
<dbReference type="InterPro" id="IPR017861">
    <property type="entry name" value="KAE1/TsaD"/>
</dbReference>
<dbReference type="InterPro" id="IPR022450">
    <property type="entry name" value="TsaD"/>
</dbReference>
<dbReference type="NCBIfam" id="TIGR00329">
    <property type="entry name" value="gcp_kae1"/>
    <property type="match status" value="1"/>
</dbReference>
<dbReference type="NCBIfam" id="TIGR03723">
    <property type="entry name" value="T6A_TsaD_YgjD"/>
    <property type="match status" value="1"/>
</dbReference>
<dbReference type="PANTHER" id="PTHR11735">
    <property type="entry name" value="TRNA N6-ADENOSINE THREONYLCARBAMOYLTRANSFERASE"/>
    <property type="match status" value="1"/>
</dbReference>
<dbReference type="PANTHER" id="PTHR11735:SF6">
    <property type="entry name" value="TRNA N6-ADENOSINE THREONYLCARBAMOYLTRANSFERASE, MITOCHONDRIAL"/>
    <property type="match status" value="1"/>
</dbReference>
<dbReference type="Pfam" id="PF00814">
    <property type="entry name" value="TsaD"/>
    <property type="match status" value="1"/>
</dbReference>
<dbReference type="PRINTS" id="PR00789">
    <property type="entry name" value="OSIALOPTASE"/>
</dbReference>
<dbReference type="SUPFAM" id="SSF53067">
    <property type="entry name" value="Actin-like ATPase domain"/>
    <property type="match status" value="2"/>
</dbReference>
<name>TSAD_PSEA8</name>
<comment type="function">
    <text evidence="1">Required for the formation of a threonylcarbamoyl group on adenosine at position 37 (t(6)A37) in tRNAs that read codons beginning with adenine. Is involved in the transfer of the threonylcarbamoyl moiety of threonylcarbamoyl-AMP (TC-AMP) to the N6 group of A37, together with TsaE and TsaB. TsaD likely plays a direct catalytic role in this reaction.</text>
</comment>
<comment type="catalytic activity">
    <reaction evidence="1">
        <text>L-threonylcarbamoyladenylate + adenosine(37) in tRNA = N(6)-L-threonylcarbamoyladenosine(37) in tRNA + AMP + H(+)</text>
        <dbReference type="Rhea" id="RHEA:37059"/>
        <dbReference type="Rhea" id="RHEA-COMP:10162"/>
        <dbReference type="Rhea" id="RHEA-COMP:10163"/>
        <dbReference type="ChEBI" id="CHEBI:15378"/>
        <dbReference type="ChEBI" id="CHEBI:73682"/>
        <dbReference type="ChEBI" id="CHEBI:74411"/>
        <dbReference type="ChEBI" id="CHEBI:74418"/>
        <dbReference type="ChEBI" id="CHEBI:456215"/>
        <dbReference type="EC" id="2.3.1.234"/>
    </reaction>
</comment>
<comment type="cofactor">
    <cofactor evidence="1">
        <name>Fe(2+)</name>
        <dbReference type="ChEBI" id="CHEBI:29033"/>
    </cofactor>
    <text evidence="1">Binds 1 Fe(2+) ion per subunit.</text>
</comment>
<comment type="subcellular location">
    <subcellularLocation>
        <location evidence="1">Cytoplasm</location>
    </subcellularLocation>
</comment>
<comment type="similarity">
    <text evidence="1">Belongs to the KAE1 / TsaD family.</text>
</comment>
<evidence type="ECO:0000255" key="1">
    <source>
        <dbReference type="HAMAP-Rule" id="MF_01445"/>
    </source>
</evidence>
<proteinExistence type="inferred from homology"/>
<accession>B7V4G6</accession>
<feature type="chain" id="PRO_1000192694" description="tRNA N6-adenosine threonylcarbamoyltransferase">
    <location>
        <begin position="1"/>
        <end position="341"/>
    </location>
</feature>
<feature type="binding site" evidence="1">
    <location>
        <position position="111"/>
    </location>
    <ligand>
        <name>Fe cation</name>
        <dbReference type="ChEBI" id="CHEBI:24875"/>
    </ligand>
</feature>
<feature type="binding site" evidence="1">
    <location>
        <position position="115"/>
    </location>
    <ligand>
        <name>Fe cation</name>
        <dbReference type="ChEBI" id="CHEBI:24875"/>
    </ligand>
</feature>
<feature type="binding site" evidence="1">
    <location>
        <begin position="134"/>
        <end position="138"/>
    </location>
    <ligand>
        <name>substrate</name>
    </ligand>
</feature>
<feature type="binding site" evidence="1">
    <location>
        <position position="167"/>
    </location>
    <ligand>
        <name>substrate</name>
    </ligand>
</feature>
<feature type="binding site" evidence="1">
    <location>
        <position position="180"/>
    </location>
    <ligand>
        <name>substrate</name>
    </ligand>
</feature>
<feature type="binding site" evidence="1">
    <location>
        <position position="276"/>
    </location>
    <ligand>
        <name>substrate</name>
    </ligand>
</feature>
<feature type="binding site" evidence="1">
    <location>
        <position position="304"/>
    </location>
    <ligand>
        <name>Fe cation</name>
        <dbReference type="ChEBI" id="CHEBI:24875"/>
    </ligand>
</feature>
<organism>
    <name type="scientific">Pseudomonas aeruginosa (strain LESB58)</name>
    <dbReference type="NCBI Taxonomy" id="557722"/>
    <lineage>
        <taxon>Bacteria</taxon>
        <taxon>Pseudomonadati</taxon>
        <taxon>Pseudomonadota</taxon>
        <taxon>Gammaproteobacteria</taxon>
        <taxon>Pseudomonadales</taxon>
        <taxon>Pseudomonadaceae</taxon>
        <taxon>Pseudomonas</taxon>
    </lineage>
</organism>
<gene>
    <name evidence="1" type="primary">tsaD</name>
    <name type="synonym">gcp</name>
    <name type="ordered locus">PLES_05771</name>
</gene>
<reference key="1">
    <citation type="journal article" date="2009" name="Genome Res.">
        <title>Newly introduced genomic prophage islands are critical determinants of in vivo competitiveness in the Liverpool epidemic strain of Pseudomonas aeruginosa.</title>
        <authorList>
            <person name="Winstanley C."/>
            <person name="Langille M.G.I."/>
            <person name="Fothergill J.L."/>
            <person name="Kukavica-Ibrulj I."/>
            <person name="Paradis-Bleau C."/>
            <person name="Sanschagrin F."/>
            <person name="Thomson N.R."/>
            <person name="Winsor G.L."/>
            <person name="Quail M.A."/>
            <person name="Lennard N."/>
            <person name="Bignell A."/>
            <person name="Clarke L."/>
            <person name="Seeger K."/>
            <person name="Saunders D."/>
            <person name="Harris D."/>
            <person name="Parkhill J."/>
            <person name="Hancock R.E.W."/>
            <person name="Brinkman F.S.L."/>
            <person name="Levesque R.C."/>
        </authorList>
    </citation>
    <scope>NUCLEOTIDE SEQUENCE [LARGE SCALE GENOMIC DNA]</scope>
    <source>
        <strain>LESB58</strain>
    </source>
</reference>